<feature type="chain" id="PRO_0000073421" description="ATP synthase gamma chain">
    <location>
        <begin position="1"/>
        <end position="287"/>
    </location>
</feature>
<comment type="function">
    <text evidence="1">Produces ATP from ADP in the presence of a proton gradient across the membrane. The gamma chain is believed to be important in regulating ATPase activity and the flow of protons through the CF(0) complex.</text>
</comment>
<comment type="subunit">
    <text evidence="1">F-type ATPases have 2 components, CF(1) - the catalytic core - and CF(0) - the membrane proton channel. CF(1) has five subunits: alpha(3), beta(3), gamma(1), delta(1), epsilon(1). CF(0) has three main subunits: a, b and c.</text>
</comment>
<comment type="subcellular location">
    <subcellularLocation>
        <location evidence="1">Cell inner membrane</location>
        <topology evidence="1">Peripheral membrane protein</topology>
    </subcellularLocation>
</comment>
<comment type="similarity">
    <text evidence="1">Belongs to the ATPase gamma chain family.</text>
</comment>
<accession>Q8PCZ6</accession>
<reference key="1">
    <citation type="journal article" date="2002" name="Nature">
        <title>Comparison of the genomes of two Xanthomonas pathogens with differing host specificities.</title>
        <authorList>
            <person name="da Silva A.C.R."/>
            <person name="Ferro J.A."/>
            <person name="Reinach F.C."/>
            <person name="Farah C.S."/>
            <person name="Furlan L.R."/>
            <person name="Quaggio R.B."/>
            <person name="Monteiro-Vitorello C.B."/>
            <person name="Van Sluys M.A."/>
            <person name="Almeida N.F. Jr."/>
            <person name="Alves L.M.C."/>
            <person name="do Amaral A.M."/>
            <person name="Bertolini M.C."/>
            <person name="Camargo L.E.A."/>
            <person name="Camarotte G."/>
            <person name="Cannavan F."/>
            <person name="Cardozo J."/>
            <person name="Chambergo F."/>
            <person name="Ciapina L.P."/>
            <person name="Cicarelli R.M.B."/>
            <person name="Coutinho L.L."/>
            <person name="Cursino-Santos J.R."/>
            <person name="El-Dorry H."/>
            <person name="Faria J.B."/>
            <person name="Ferreira A.J.S."/>
            <person name="Ferreira R.C.C."/>
            <person name="Ferro M.I.T."/>
            <person name="Formighieri E.F."/>
            <person name="Franco M.C."/>
            <person name="Greggio C.C."/>
            <person name="Gruber A."/>
            <person name="Katsuyama A.M."/>
            <person name="Kishi L.T."/>
            <person name="Leite R.P."/>
            <person name="Lemos E.G.M."/>
            <person name="Lemos M.V.F."/>
            <person name="Locali E.C."/>
            <person name="Machado M.A."/>
            <person name="Madeira A.M.B.N."/>
            <person name="Martinez-Rossi N.M."/>
            <person name="Martins E.C."/>
            <person name="Meidanis J."/>
            <person name="Menck C.F.M."/>
            <person name="Miyaki C.Y."/>
            <person name="Moon D.H."/>
            <person name="Moreira L.M."/>
            <person name="Novo M.T.M."/>
            <person name="Okura V.K."/>
            <person name="Oliveira M.C."/>
            <person name="Oliveira V.R."/>
            <person name="Pereira H.A."/>
            <person name="Rossi A."/>
            <person name="Sena J.A.D."/>
            <person name="Silva C."/>
            <person name="de Souza R.F."/>
            <person name="Spinola L.A.F."/>
            <person name="Takita M.A."/>
            <person name="Tamura R.E."/>
            <person name="Teixeira E.C."/>
            <person name="Tezza R.I.D."/>
            <person name="Trindade dos Santos M."/>
            <person name="Truffi D."/>
            <person name="Tsai S.M."/>
            <person name="White F.F."/>
            <person name="Setubal J.C."/>
            <person name="Kitajima J.P."/>
        </authorList>
    </citation>
    <scope>NUCLEOTIDE SEQUENCE [LARGE SCALE GENOMIC DNA]</scope>
    <source>
        <strain>ATCC 33913 / DSM 3586 / NCPPB 528 / LMG 568 / P 25</strain>
    </source>
</reference>
<evidence type="ECO:0000255" key="1">
    <source>
        <dbReference type="HAMAP-Rule" id="MF_00815"/>
    </source>
</evidence>
<proteinExistence type="inferred from homology"/>
<dbReference type="EMBL" id="AE008922">
    <property type="protein sequence ID" value="AAM39869.1"/>
    <property type="molecule type" value="Genomic_DNA"/>
</dbReference>
<dbReference type="RefSeq" id="NP_635945.1">
    <property type="nucleotide sequence ID" value="NC_003902.1"/>
</dbReference>
<dbReference type="RefSeq" id="WP_011035800.1">
    <property type="nucleotide sequence ID" value="NC_003902.1"/>
</dbReference>
<dbReference type="SMR" id="Q8PCZ6"/>
<dbReference type="STRING" id="190485.XCC0553"/>
<dbReference type="EnsemblBacteria" id="AAM39869">
    <property type="protein sequence ID" value="AAM39869"/>
    <property type="gene ID" value="XCC0553"/>
</dbReference>
<dbReference type="KEGG" id="xcc:XCC0553"/>
<dbReference type="PATRIC" id="fig|190485.4.peg.610"/>
<dbReference type="eggNOG" id="COG0224">
    <property type="taxonomic scope" value="Bacteria"/>
</dbReference>
<dbReference type="HOGENOM" id="CLU_050669_0_1_6"/>
<dbReference type="OrthoDB" id="9812769at2"/>
<dbReference type="Proteomes" id="UP000001010">
    <property type="component" value="Chromosome"/>
</dbReference>
<dbReference type="GO" id="GO:0005886">
    <property type="term" value="C:plasma membrane"/>
    <property type="evidence" value="ECO:0007669"/>
    <property type="project" value="UniProtKB-SubCell"/>
</dbReference>
<dbReference type="GO" id="GO:0045259">
    <property type="term" value="C:proton-transporting ATP synthase complex"/>
    <property type="evidence" value="ECO:0007669"/>
    <property type="project" value="UniProtKB-KW"/>
</dbReference>
<dbReference type="GO" id="GO:0005524">
    <property type="term" value="F:ATP binding"/>
    <property type="evidence" value="ECO:0007669"/>
    <property type="project" value="UniProtKB-UniRule"/>
</dbReference>
<dbReference type="GO" id="GO:0046933">
    <property type="term" value="F:proton-transporting ATP synthase activity, rotational mechanism"/>
    <property type="evidence" value="ECO:0007669"/>
    <property type="project" value="UniProtKB-UniRule"/>
</dbReference>
<dbReference type="GO" id="GO:0015986">
    <property type="term" value="P:proton motive force-driven ATP synthesis"/>
    <property type="evidence" value="ECO:0000318"/>
    <property type="project" value="GO_Central"/>
</dbReference>
<dbReference type="GO" id="GO:0042777">
    <property type="term" value="P:proton motive force-driven plasma membrane ATP synthesis"/>
    <property type="evidence" value="ECO:0007669"/>
    <property type="project" value="UniProtKB-UniRule"/>
</dbReference>
<dbReference type="CDD" id="cd12151">
    <property type="entry name" value="F1-ATPase_gamma"/>
    <property type="match status" value="1"/>
</dbReference>
<dbReference type="FunFam" id="1.10.287.80:FF:000005">
    <property type="entry name" value="ATP synthase gamma chain"/>
    <property type="match status" value="1"/>
</dbReference>
<dbReference type="FunFam" id="3.40.1380.10:FF:000007">
    <property type="entry name" value="ATP synthase gamma chain"/>
    <property type="match status" value="1"/>
</dbReference>
<dbReference type="Gene3D" id="3.40.1380.10">
    <property type="match status" value="1"/>
</dbReference>
<dbReference type="Gene3D" id="1.10.287.80">
    <property type="entry name" value="ATP synthase, gamma subunit, helix hairpin domain"/>
    <property type="match status" value="1"/>
</dbReference>
<dbReference type="HAMAP" id="MF_00815">
    <property type="entry name" value="ATP_synth_gamma_bact"/>
    <property type="match status" value="1"/>
</dbReference>
<dbReference type="InterPro" id="IPR035968">
    <property type="entry name" value="ATP_synth_F1_ATPase_gsu"/>
</dbReference>
<dbReference type="InterPro" id="IPR000131">
    <property type="entry name" value="ATP_synth_F1_gsu"/>
</dbReference>
<dbReference type="InterPro" id="IPR023632">
    <property type="entry name" value="ATP_synth_F1_gsu_CS"/>
</dbReference>
<dbReference type="NCBIfam" id="TIGR01146">
    <property type="entry name" value="ATPsyn_F1gamma"/>
    <property type="match status" value="1"/>
</dbReference>
<dbReference type="NCBIfam" id="NF004144">
    <property type="entry name" value="PRK05621.1-1"/>
    <property type="match status" value="1"/>
</dbReference>
<dbReference type="PANTHER" id="PTHR11693">
    <property type="entry name" value="ATP SYNTHASE GAMMA CHAIN"/>
    <property type="match status" value="1"/>
</dbReference>
<dbReference type="PANTHER" id="PTHR11693:SF22">
    <property type="entry name" value="ATP SYNTHASE SUBUNIT GAMMA, MITOCHONDRIAL"/>
    <property type="match status" value="1"/>
</dbReference>
<dbReference type="Pfam" id="PF00231">
    <property type="entry name" value="ATP-synt"/>
    <property type="match status" value="1"/>
</dbReference>
<dbReference type="PRINTS" id="PR00126">
    <property type="entry name" value="ATPASEGAMMA"/>
</dbReference>
<dbReference type="SUPFAM" id="SSF52943">
    <property type="entry name" value="ATP synthase (F1-ATPase), gamma subunit"/>
    <property type="match status" value="1"/>
</dbReference>
<dbReference type="PROSITE" id="PS00153">
    <property type="entry name" value="ATPASE_GAMMA"/>
    <property type="match status" value="1"/>
</dbReference>
<sequence>MAGGREIKTKIKSVQNTRKVTRALEMVSASKIRKAQERMKTSRPYAQAMKQVIGHLAQASTDYQHPFLVEREQVKRVGYIVISSDRGLAGGLNNNLFRKMLGEVRPWQDKGAEIDVVTIGQKASAFFRRIKVNMVGSVTHLGDSPHIEQLVGVIKVMLDAFTEGKVDRVYLVYNRFVNTMTQKASFEQLLPLPAAEHKVAHHDWDYLYEPDAATVLEHVMTRYIESLVYQAVLENVASEHAARMVAMKAASDNANKMIGTLQLVYNKARQAAITQEISEIVSGAAAV</sequence>
<protein>
    <recommendedName>
        <fullName evidence="1">ATP synthase gamma chain</fullName>
    </recommendedName>
    <alternativeName>
        <fullName evidence="1">ATP synthase F1 sector gamma subunit</fullName>
    </alternativeName>
    <alternativeName>
        <fullName evidence="1">F-ATPase gamma subunit</fullName>
    </alternativeName>
</protein>
<organism>
    <name type="scientific">Xanthomonas campestris pv. campestris (strain ATCC 33913 / DSM 3586 / NCPPB 528 / LMG 568 / P 25)</name>
    <dbReference type="NCBI Taxonomy" id="190485"/>
    <lineage>
        <taxon>Bacteria</taxon>
        <taxon>Pseudomonadati</taxon>
        <taxon>Pseudomonadota</taxon>
        <taxon>Gammaproteobacteria</taxon>
        <taxon>Lysobacterales</taxon>
        <taxon>Lysobacteraceae</taxon>
        <taxon>Xanthomonas</taxon>
    </lineage>
</organism>
<keyword id="KW-0066">ATP synthesis</keyword>
<keyword id="KW-0997">Cell inner membrane</keyword>
<keyword id="KW-1003">Cell membrane</keyword>
<keyword id="KW-0139">CF(1)</keyword>
<keyword id="KW-0375">Hydrogen ion transport</keyword>
<keyword id="KW-0406">Ion transport</keyword>
<keyword id="KW-0472">Membrane</keyword>
<keyword id="KW-1185">Reference proteome</keyword>
<keyword id="KW-0813">Transport</keyword>
<gene>
    <name evidence="1" type="primary">atpG</name>
    <name type="ordered locus">XCC0553</name>
</gene>
<name>ATPG_XANCP</name>